<organism>
    <name type="scientific">Gloeothece citriformis (strain PCC 7424)</name>
    <name type="common">Cyanothece sp. (strain PCC 7424)</name>
    <dbReference type="NCBI Taxonomy" id="65393"/>
    <lineage>
        <taxon>Bacteria</taxon>
        <taxon>Bacillati</taxon>
        <taxon>Cyanobacteriota</taxon>
        <taxon>Cyanophyceae</taxon>
        <taxon>Oscillatoriophycideae</taxon>
        <taxon>Chroococcales</taxon>
        <taxon>Aphanothecaceae</taxon>
        <taxon>Gloeothece</taxon>
        <taxon>Gloeothece citriformis</taxon>
    </lineage>
</organism>
<sequence length="532" mass="58198">MADAPIAPVVLVILDGWGYRQTTDYNAIAVANTPVMDSLWEAYPKTLIRTSGKDVGLPEGQMGNSEVGHLNIGAGRIVPQELVRITDAIEDGSIFQSPVLINLCDEVKGRGGKLHLIGLSSAGGVHSHLCHLLGLLDLAKLHSVSDVCVHAITDGRDTNPTEGVNVIEAIQAHIDKIGVGRISTVCGRYYAMDRDRRWDRVKKAYDLLTEDGEGDGRSASQILKDFYAQDITDEFILPTRVAPGAIEPGDGIIFYNFRPDRARQLCYAFTMPDFDGFERDLIQPLSFVTFTQYDPKLPVKVVFEPQSLTNILGEVIAKKGLRQFRTAETEKYPHVTYFFNGGLEQPFEGEDRELIQSPMVATYDKAPVMSAEAVTDTACAAIKKGIYSLVVMNYANPDMVGHTGNMEAAVQAIEAVDRCLGRLLGCINKMGGTVLITADHGNAEYMRDEEGNPWTAHTTNPVPFILVEGEKRKIPGHGANVVLRNDGRLADIAPTILDILQLPQPNNMTGKSLIEPAGFDVKTNRTPVRISL</sequence>
<name>GPMI_GLOC7</name>
<protein>
    <recommendedName>
        <fullName evidence="1">2,3-bisphosphoglycerate-independent phosphoglycerate mutase</fullName>
        <shortName evidence="1">BPG-independent PGAM</shortName>
        <shortName evidence="1">Phosphoglyceromutase</shortName>
        <shortName evidence="1">iPGM</shortName>
        <ecNumber evidence="1">5.4.2.12</ecNumber>
    </recommendedName>
</protein>
<keyword id="KW-0324">Glycolysis</keyword>
<keyword id="KW-0413">Isomerase</keyword>
<keyword id="KW-0464">Manganese</keyword>
<keyword id="KW-0479">Metal-binding</keyword>
<keyword id="KW-1185">Reference proteome</keyword>
<proteinExistence type="inferred from homology"/>
<dbReference type="EC" id="5.4.2.12" evidence="1"/>
<dbReference type="EMBL" id="CP001291">
    <property type="protein sequence ID" value="ACK70632.1"/>
    <property type="molecule type" value="Genomic_DNA"/>
</dbReference>
<dbReference type="RefSeq" id="WP_015954237.1">
    <property type="nucleotide sequence ID" value="NC_011729.1"/>
</dbReference>
<dbReference type="SMR" id="B7KGG1"/>
<dbReference type="STRING" id="65393.PCC7424_2210"/>
<dbReference type="KEGG" id="cyc:PCC7424_2210"/>
<dbReference type="eggNOG" id="COG0696">
    <property type="taxonomic scope" value="Bacteria"/>
</dbReference>
<dbReference type="HOGENOM" id="CLU_026099_2_0_3"/>
<dbReference type="OrthoDB" id="9800863at2"/>
<dbReference type="UniPathway" id="UPA00109">
    <property type="reaction ID" value="UER00186"/>
</dbReference>
<dbReference type="Proteomes" id="UP000002384">
    <property type="component" value="Chromosome"/>
</dbReference>
<dbReference type="GO" id="GO:0005829">
    <property type="term" value="C:cytosol"/>
    <property type="evidence" value="ECO:0007669"/>
    <property type="project" value="TreeGrafter"/>
</dbReference>
<dbReference type="GO" id="GO:0030145">
    <property type="term" value="F:manganese ion binding"/>
    <property type="evidence" value="ECO:0007669"/>
    <property type="project" value="UniProtKB-UniRule"/>
</dbReference>
<dbReference type="GO" id="GO:0004619">
    <property type="term" value="F:phosphoglycerate mutase activity"/>
    <property type="evidence" value="ECO:0007669"/>
    <property type="project" value="UniProtKB-EC"/>
</dbReference>
<dbReference type="GO" id="GO:0006007">
    <property type="term" value="P:glucose catabolic process"/>
    <property type="evidence" value="ECO:0007669"/>
    <property type="project" value="InterPro"/>
</dbReference>
<dbReference type="GO" id="GO:0006096">
    <property type="term" value="P:glycolytic process"/>
    <property type="evidence" value="ECO:0007669"/>
    <property type="project" value="UniProtKB-UniRule"/>
</dbReference>
<dbReference type="CDD" id="cd16010">
    <property type="entry name" value="iPGM"/>
    <property type="match status" value="1"/>
</dbReference>
<dbReference type="FunFam" id="3.40.1450.10:FF:000002">
    <property type="entry name" value="2,3-bisphosphoglycerate-independent phosphoglycerate mutase"/>
    <property type="match status" value="1"/>
</dbReference>
<dbReference type="Gene3D" id="3.40.720.10">
    <property type="entry name" value="Alkaline Phosphatase, subunit A"/>
    <property type="match status" value="1"/>
</dbReference>
<dbReference type="Gene3D" id="3.40.1450.10">
    <property type="entry name" value="BPG-independent phosphoglycerate mutase, domain B"/>
    <property type="match status" value="1"/>
</dbReference>
<dbReference type="HAMAP" id="MF_01038">
    <property type="entry name" value="GpmI"/>
    <property type="match status" value="1"/>
</dbReference>
<dbReference type="InterPro" id="IPR017850">
    <property type="entry name" value="Alkaline_phosphatase_core_sf"/>
</dbReference>
<dbReference type="InterPro" id="IPR011258">
    <property type="entry name" value="BPG-indep_PGM_N"/>
</dbReference>
<dbReference type="InterPro" id="IPR006124">
    <property type="entry name" value="Metalloenzyme"/>
</dbReference>
<dbReference type="InterPro" id="IPR036646">
    <property type="entry name" value="PGAM_B_sf"/>
</dbReference>
<dbReference type="InterPro" id="IPR005995">
    <property type="entry name" value="Pgm_bpd_ind"/>
</dbReference>
<dbReference type="NCBIfam" id="TIGR01307">
    <property type="entry name" value="pgm_bpd_ind"/>
    <property type="match status" value="1"/>
</dbReference>
<dbReference type="PANTHER" id="PTHR31637">
    <property type="entry name" value="2,3-BISPHOSPHOGLYCERATE-INDEPENDENT PHOSPHOGLYCERATE MUTASE"/>
    <property type="match status" value="1"/>
</dbReference>
<dbReference type="PANTHER" id="PTHR31637:SF0">
    <property type="entry name" value="2,3-BISPHOSPHOGLYCERATE-INDEPENDENT PHOSPHOGLYCERATE MUTASE"/>
    <property type="match status" value="1"/>
</dbReference>
<dbReference type="Pfam" id="PF06415">
    <property type="entry name" value="iPGM_N"/>
    <property type="match status" value="1"/>
</dbReference>
<dbReference type="Pfam" id="PF01676">
    <property type="entry name" value="Metalloenzyme"/>
    <property type="match status" value="1"/>
</dbReference>
<dbReference type="PIRSF" id="PIRSF001492">
    <property type="entry name" value="IPGAM"/>
    <property type="match status" value="1"/>
</dbReference>
<dbReference type="SUPFAM" id="SSF64158">
    <property type="entry name" value="2,3-Bisphosphoglycerate-independent phosphoglycerate mutase, substrate-binding domain"/>
    <property type="match status" value="1"/>
</dbReference>
<dbReference type="SUPFAM" id="SSF53649">
    <property type="entry name" value="Alkaline phosphatase-like"/>
    <property type="match status" value="1"/>
</dbReference>
<comment type="function">
    <text evidence="1">Catalyzes the interconversion of 2-phosphoglycerate and 3-phosphoglycerate.</text>
</comment>
<comment type="catalytic activity">
    <reaction evidence="1">
        <text>(2R)-2-phosphoglycerate = (2R)-3-phosphoglycerate</text>
        <dbReference type="Rhea" id="RHEA:15901"/>
        <dbReference type="ChEBI" id="CHEBI:58272"/>
        <dbReference type="ChEBI" id="CHEBI:58289"/>
        <dbReference type="EC" id="5.4.2.12"/>
    </reaction>
</comment>
<comment type="cofactor">
    <cofactor evidence="1">
        <name>Mn(2+)</name>
        <dbReference type="ChEBI" id="CHEBI:29035"/>
    </cofactor>
    <text evidence="1">Binds 2 manganese ions per subunit.</text>
</comment>
<comment type="pathway">
    <text evidence="1">Carbohydrate degradation; glycolysis; pyruvate from D-glyceraldehyde 3-phosphate: step 3/5.</text>
</comment>
<comment type="subunit">
    <text evidence="1">Monomer.</text>
</comment>
<comment type="similarity">
    <text evidence="1">Belongs to the BPG-independent phosphoglycerate mutase family.</text>
</comment>
<accession>B7KGG1</accession>
<reference key="1">
    <citation type="journal article" date="2011" name="MBio">
        <title>Novel metabolic attributes of the genus Cyanothece, comprising a group of unicellular nitrogen-fixing Cyanobacteria.</title>
        <authorList>
            <person name="Bandyopadhyay A."/>
            <person name="Elvitigala T."/>
            <person name="Welsh E."/>
            <person name="Stockel J."/>
            <person name="Liberton M."/>
            <person name="Min H."/>
            <person name="Sherman L.A."/>
            <person name="Pakrasi H.B."/>
        </authorList>
    </citation>
    <scope>NUCLEOTIDE SEQUENCE [LARGE SCALE GENOMIC DNA]</scope>
    <source>
        <strain>PCC 7424</strain>
    </source>
</reference>
<feature type="chain" id="PRO_1000135897" description="2,3-bisphosphoglycerate-independent phosphoglycerate mutase">
    <location>
        <begin position="1"/>
        <end position="532"/>
    </location>
</feature>
<feature type="active site" description="Phosphoserine intermediate" evidence="1">
    <location>
        <position position="65"/>
    </location>
</feature>
<feature type="binding site" evidence="1">
    <location>
        <position position="15"/>
    </location>
    <ligand>
        <name>Mn(2+)</name>
        <dbReference type="ChEBI" id="CHEBI:29035"/>
        <label>2</label>
    </ligand>
</feature>
<feature type="binding site" evidence="1">
    <location>
        <position position="65"/>
    </location>
    <ligand>
        <name>Mn(2+)</name>
        <dbReference type="ChEBI" id="CHEBI:29035"/>
        <label>2</label>
    </ligand>
</feature>
<feature type="binding site" evidence="1">
    <location>
        <position position="126"/>
    </location>
    <ligand>
        <name>substrate</name>
    </ligand>
</feature>
<feature type="binding site" evidence="1">
    <location>
        <begin position="156"/>
        <end position="157"/>
    </location>
    <ligand>
        <name>substrate</name>
    </ligand>
</feature>
<feature type="binding site" evidence="1">
    <location>
        <position position="188"/>
    </location>
    <ligand>
        <name>substrate</name>
    </ligand>
</feature>
<feature type="binding site" evidence="1">
    <location>
        <position position="194"/>
    </location>
    <ligand>
        <name>substrate</name>
    </ligand>
</feature>
<feature type="binding site" evidence="1">
    <location>
        <begin position="258"/>
        <end position="261"/>
    </location>
    <ligand>
        <name>substrate</name>
    </ligand>
</feature>
<feature type="binding site" evidence="1">
    <location>
        <position position="331"/>
    </location>
    <ligand>
        <name>substrate</name>
    </ligand>
</feature>
<feature type="binding site" evidence="1">
    <location>
        <position position="398"/>
    </location>
    <ligand>
        <name>Mn(2+)</name>
        <dbReference type="ChEBI" id="CHEBI:29035"/>
        <label>1</label>
    </ligand>
</feature>
<feature type="binding site" evidence="1">
    <location>
        <position position="402"/>
    </location>
    <ligand>
        <name>Mn(2+)</name>
        <dbReference type="ChEBI" id="CHEBI:29035"/>
        <label>1</label>
    </ligand>
</feature>
<feature type="binding site" evidence="1">
    <location>
        <position position="439"/>
    </location>
    <ligand>
        <name>Mn(2+)</name>
        <dbReference type="ChEBI" id="CHEBI:29035"/>
        <label>2</label>
    </ligand>
</feature>
<feature type="binding site" evidence="1">
    <location>
        <position position="440"/>
    </location>
    <ligand>
        <name>Mn(2+)</name>
        <dbReference type="ChEBI" id="CHEBI:29035"/>
        <label>2</label>
    </ligand>
</feature>
<feature type="binding site" evidence="1">
    <location>
        <position position="457"/>
    </location>
    <ligand>
        <name>Mn(2+)</name>
        <dbReference type="ChEBI" id="CHEBI:29035"/>
        <label>1</label>
    </ligand>
</feature>
<gene>
    <name evidence="1" type="primary">gpmI</name>
    <name type="ordered locus">PCC7424_2210</name>
</gene>
<evidence type="ECO:0000255" key="1">
    <source>
        <dbReference type="HAMAP-Rule" id="MF_01038"/>
    </source>
</evidence>